<comment type="function">
    <text evidence="5 6 7">Glycerophosphocholine acyltransferase (GPCAT) that utilizes acyl-CoA to acylate glycero-3-phosphocholine (GPC), forming lysophosphatidylcholine (LPC) (PubMed:18430972, PubMed:27758859). Shows broad acyl specificities with a preference for 16:0-CoA, polyunsaturated acyl-CoA, and the hydroxylated ricinoleoyl-CoA (PubMed:18430972, PubMed:27758859). Also catalyzes the acylation of glycero-3-phosphoethanolamine (GPE) with acyl-CoA (PubMed:27758859). In addition to acyl-CoA, GPCAT efficiently utilizes LPC and lysophosphatidylethanolamine (LPE) as acyl donors in the acylation of GPC (PubMed:27758859). Contributes to the maintenance of phosphatidylcholine (PC) homeostasis and might also have specific functions in acyl editing of PC, such as transferring acyl groups modified at the sn-2 position of PC to the sn-1 (PubMed:27758859). Involved in postsynthetic PC remodeling that produces more saturated PC species (PubMed:30514764).</text>
</comment>
<comment type="catalytic activity">
    <reaction evidence="5 6">
        <text>sn-glycerol 3-phosphocholine + an acyl-CoA = a 1-acyl-sn-glycero-3-phosphocholine + CoA</text>
        <dbReference type="Rhea" id="RHEA:58476"/>
        <dbReference type="ChEBI" id="CHEBI:16870"/>
        <dbReference type="ChEBI" id="CHEBI:57287"/>
        <dbReference type="ChEBI" id="CHEBI:58168"/>
        <dbReference type="ChEBI" id="CHEBI:58342"/>
    </reaction>
</comment>
<comment type="catalytic activity">
    <reaction evidence="6">
        <text>sn-glycero-3-phosphoethanolamine + an acyl-CoA = a monoacyl-sn-glycero-3-phosphoethanolamine + CoA</text>
        <dbReference type="Rhea" id="RHEA:62108"/>
        <dbReference type="ChEBI" id="CHEBI:57287"/>
        <dbReference type="ChEBI" id="CHEBI:58342"/>
        <dbReference type="ChEBI" id="CHEBI:67274"/>
        <dbReference type="ChEBI" id="CHEBI:143890"/>
    </reaction>
</comment>
<comment type="catalytic activity">
    <reaction evidence="6">
        <text>sn-glycero-3-phosphoethanolamine + (9Z)-octadecenoyl-CoA = (9Z-octadecenoyl)-sn-glycero-3-phosphoethanolamine + CoA</text>
        <dbReference type="Rhea" id="RHEA:62104"/>
        <dbReference type="ChEBI" id="CHEBI:57287"/>
        <dbReference type="ChEBI" id="CHEBI:57387"/>
        <dbReference type="ChEBI" id="CHEBI:143890"/>
        <dbReference type="ChEBI" id="CHEBI:145434"/>
    </reaction>
    <physiologicalReaction direction="left-to-right" evidence="12">
        <dbReference type="Rhea" id="RHEA:62105"/>
    </physiologicalReaction>
</comment>
<comment type="catalytic activity">
    <reaction evidence="6">
        <text>sn-glycerol 3-phosphocholine + hexadecanoyl-CoA = hexadecanoyl-sn-glycero-3-phosphocholine + CoA</text>
        <dbReference type="Rhea" id="RHEA:56148"/>
        <dbReference type="ChEBI" id="CHEBI:16870"/>
        <dbReference type="ChEBI" id="CHEBI:57287"/>
        <dbReference type="ChEBI" id="CHEBI:57379"/>
        <dbReference type="ChEBI" id="CHEBI:64563"/>
    </reaction>
    <physiologicalReaction direction="left-to-right" evidence="12">
        <dbReference type="Rhea" id="RHEA:56149"/>
    </physiologicalReaction>
</comment>
<comment type="catalytic activity">
    <reaction evidence="6">
        <text>(9Z,12Z)-octadecadienoyl-CoA + sn-glycerol 3-phosphocholine = (9Z,12Z-octadecadienoyl)-sn-glycero-3-phosphocholine + CoA</text>
        <dbReference type="Rhea" id="RHEA:56152"/>
        <dbReference type="ChEBI" id="CHEBI:16870"/>
        <dbReference type="ChEBI" id="CHEBI:57287"/>
        <dbReference type="ChEBI" id="CHEBI:57383"/>
        <dbReference type="ChEBI" id="CHEBI:140444"/>
    </reaction>
    <physiologicalReaction direction="left-to-right" evidence="12">
        <dbReference type="Rhea" id="RHEA:56153"/>
    </physiologicalReaction>
</comment>
<comment type="catalytic activity">
    <reaction evidence="6">
        <text>(12R)-hydroxy-(9Z)-octadecenoyl-CoA + sn-glycerol 3-phosphocholine = (12R-hydroxy-9Z-octadecenoyl)-sn-glycero-3-phosphocholine + CoA</text>
        <dbReference type="Rhea" id="RHEA:56156"/>
        <dbReference type="ChEBI" id="CHEBI:16870"/>
        <dbReference type="ChEBI" id="CHEBI:57287"/>
        <dbReference type="ChEBI" id="CHEBI:139559"/>
        <dbReference type="ChEBI" id="CHEBI:140446"/>
    </reaction>
    <physiologicalReaction direction="left-to-right" evidence="12">
        <dbReference type="Rhea" id="RHEA:56157"/>
    </physiologicalReaction>
</comment>
<comment type="catalytic activity">
    <reaction evidence="6">
        <text>(9Z,12Z,15Z)-octadecatrienoyl-CoA + sn-glycerol 3-phosphocholine = (9Z,12Z,15Z-octadecatrienoyl)-sn-glycero-3-phosphocholine + CoA</text>
        <dbReference type="Rhea" id="RHEA:56164"/>
        <dbReference type="ChEBI" id="CHEBI:16870"/>
        <dbReference type="ChEBI" id="CHEBI:57287"/>
        <dbReference type="ChEBI" id="CHEBI:74034"/>
        <dbReference type="ChEBI" id="CHEBI:140445"/>
    </reaction>
    <physiologicalReaction direction="left-to-right" evidence="12">
        <dbReference type="Rhea" id="RHEA:56165"/>
    </physiologicalReaction>
</comment>
<comment type="catalytic activity">
    <reaction evidence="6">
        <text>sn-glycerol 3-phosphocholine + (9Z)-octadecenoyl-CoA = (9Z-octadecenoyl)-sn-glycero-3-phosphocholine + CoA</text>
        <dbReference type="Rhea" id="RHEA:56168"/>
        <dbReference type="ChEBI" id="CHEBI:16870"/>
        <dbReference type="ChEBI" id="CHEBI:57287"/>
        <dbReference type="ChEBI" id="CHEBI:57387"/>
        <dbReference type="ChEBI" id="CHEBI:76083"/>
    </reaction>
    <physiologicalReaction direction="left-to-right" evidence="12">
        <dbReference type="Rhea" id="RHEA:56169"/>
    </physiologicalReaction>
</comment>
<comment type="catalytic activity">
    <reaction evidence="6">
        <text>1-(9Z-octadecenoyl)-sn-glycero-3-phosphoethanolamine + sn-glycerol 3-phosphocholine = (9Z-octadecenoyl)-sn-glycero-3-phosphocholine + sn-glycero-3-phosphoethanolamine</text>
        <dbReference type="Rhea" id="RHEA:56236"/>
        <dbReference type="ChEBI" id="CHEBI:16870"/>
        <dbReference type="ChEBI" id="CHEBI:74971"/>
        <dbReference type="ChEBI" id="CHEBI:76083"/>
        <dbReference type="ChEBI" id="CHEBI:143890"/>
    </reaction>
    <physiologicalReaction direction="left-to-right" evidence="12">
        <dbReference type="Rhea" id="RHEA:56237"/>
    </physiologicalReaction>
</comment>
<comment type="activity regulation">
    <text evidence="5 6">The GPCAT activity is sensitive to N-ethylmaleimide, phenanthroline, and divalent cations including Ca(2+), Mg(2+), Mn(2+) and Zn(2+) (PubMed:18430972). The activity is also inhibited by glycerol-3-phosphate (G3P) (PubMed:27758859).</text>
</comment>
<comment type="biophysicochemical properties">
    <kinetics>
        <KM evidence="6">0.45 mM for glycero-3-phosphocholine (GPC)</KM>
        <Vmax evidence="6">87.0 nmol/min/mg enzyme toward glycero-3-phosphocholine (GPC)</Vmax>
    </kinetics>
    <phDependence>
        <text evidence="5">Optimum pH is 6.5-8.5.</text>
    </phDependence>
</comment>
<comment type="subcellular location">
    <subcellularLocation>
        <location evidence="3 5">Membrane</location>
        <topology evidence="3">Multi-pass membrane protein</topology>
    </subcellularLocation>
</comment>
<comment type="disruption phenotype">
    <text evidence="7">Decreases the levels of monounsaturated PC species and increased those of diunsaturated PC species. Does not significantly affect phosphatidylethanolamine, phosphatidylinositol, and phosphatidylserine profiles.</text>
</comment>
<comment type="similarity">
    <text evidence="9">Belongs to the GPC1 family.</text>
</comment>
<gene>
    <name evidence="8" type="primary">GPC1</name>
    <name type="ordered locus">YGR149W</name>
    <name type="ORF">G6639</name>
</gene>
<keyword id="KW-0012">Acyltransferase</keyword>
<keyword id="KW-0444">Lipid biosynthesis</keyword>
<keyword id="KW-0443">Lipid metabolism</keyword>
<keyword id="KW-0472">Membrane</keyword>
<keyword id="KW-0594">Phospholipid biosynthesis</keyword>
<keyword id="KW-1208">Phospholipid metabolism</keyword>
<keyword id="KW-0597">Phosphoprotein</keyword>
<keyword id="KW-1185">Reference proteome</keyword>
<keyword id="KW-0808">Transferase</keyword>
<keyword id="KW-0812">Transmembrane</keyword>
<keyword id="KW-1133">Transmembrane helix</keyword>
<reference key="1">
    <citation type="journal article" date="1995" name="Yeast">
        <title>The sequence of a 27 kb segment on the right arm of chromosome VII from Saccharomyces cerevisiae reveals MOL1, NAT2, RPL30B, RSR1, CYS4, PEM1/CHO2, NSR1 genes and ten new open reading frames.</title>
        <authorList>
            <person name="Skala J."/>
            <person name="Nawrocki A."/>
            <person name="Goffeau A."/>
        </authorList>
    </citation>
    <scope>NUCLEOTIDE SEQUENCE [GENOMIC DNA]</scope>
    <source>
        <strain>ATCC 204508 / S288c</strain>
    </source>
</reference>
<reference key="2">
    <citation type="journal article" date="1997" name="Nature">
        <title>The nucleotide sequence of Saccharomyces cerevisiae chromosome VII.</title>
        <authorList>
            <person name="Tettelin H."/>
            <person name="Agostoni-Carbone M.L."/>
            <person name="Albermann K."/>
            <person name="Albers M."/>
            <person name="Arroyo J."/>
            <person name="Backes U."/>
            <person name="Barreiros T."/>
            <person name="Bertani I."/>
            <person name="Bjourson A.J."/>
            <person name="Brueckner M."/>
            <person name="Bruschi C.V."/>
            <person name="Carignani G."/>
            <person name="Castagnoli L."/>
            <person name="Cerdan E."/>
            <person name="Clemente M.L."/>
            <person name="Coblenz A."/>
            <person name="Coglievina M."/>
            <person name="Coissac E."/>
            <person name="Defoor E."/>
            <person name="Del Bino S."/>
            <person name="Delius H."/>
            <person name="Delneri D."/>
            <person name="de Wergifosse P."/>
            <person name="Dujon B."/>
            <person name="Durand P."/>
            <person name="Entian K.-D."/>
            <person name="Eraso P."/>
            <person name="Escribano V."/>
            <person name="Fabiani L."/>
            <person name="Fartmann B."/>
            <person name="Feroli F."/>
            <person name="Feuermann M."/>
            <person name="Frontali L."/>
            <person name="Garcia-Gonzalez M."/>
            <person name="Garcia-Saez M.I."/>
            <person name="Goffeau A."/>
            <person name="Guerreiro P."/>
            <person name="Hani J."/>
            <person name="Hansen M."/>
            <person name="Hebling U."/>
            <person name="Hernandez K."/>
            <person name="Heumann K."/>
            <person name="Hilger F."/>
            <person name="Hofmann B."/>
            <person name="Indge K.J."/>
            <person name="James C.M."/>
            <person name="Klima R."/>
            <person name="Koetter P."/>
            <person name="Kramer B."/>
            <person name="Kramer W."/>
            <person name="Lauquin G."/>
            <person name="Leuther H."/>
            <person name="Louis E.J."/>
            <person name="Maillier E."/>
            <person name="Marconi A."/>
            <person name="Martegani E."/>
            <person name="Mazon M.J."/>
            <person name="Mazzoni C."/>
            <person name="McReynolds A.D.K."/>
            <person name="Melchioretto P."/>
            <person name="Mewes H.-W."/>
            <person name="Minenkova O."/>
            <person name="Mueller-Auer S."/>
            <person name="Nawrocki A."/>
            <person name="Netter P."/>
            <person name="Neu R."/>
            <person name="Nombela C."/>
            <person name="Oliver S.G."/>
            <person name="Panzeri L."/>
            <person name="Paoluzi S."/>
            <person name="Plevani P."/>
            <person name="Portetelle D."/>
            <person name="Portillo F."/>
            <person name="Potier S."/>
            <person name="Purnelle B."/>
            <person name="Rieger M."/>
            <person name="Riles L."/>
            <person name="Rinaldi T."/>
            <person name="Robben J."/>
            <person name="Rodrigues-Pousada C."/>
            <person name="Rodriguez-Belmonte E."/>
            <person name="Rodriguez-Torres A.M."/>
            <person name="Rose M."/>
            <person name="Ruzzi M."/>
            <person name="Saliola M."/>
            <person name="Sanchez-Perez M."/>
            <person name="Schaefer B."/>
            <person name="Schaefer M."/>
            <person name="Scharfe M."/>
            <person name="Schmidheini T."/>
            <person name="Schreer A."/>
            <person name="Skala J."/>
            <person name="Souciet J.-L."/>
            <person name="Steensma H.Y."/>
            <person name="Talla E."/>
            <person name="Thierry A."/>
            <person name="Vandenbol M."/>
            <person name="van der Aart Q.J.M."/>
            <person name="Van Dyck L."/>
            <person name="Vanoni M."/>
            <person name="Verhasselt P."/>
            <person name="Voet M."/>
            <person name="Volckaert G."/>
            <person name="Wambutt R."/>
            <person name="Watson M.D."/>
            <person name="Weber N."/>
            <person name="Wedler E."/>
            <person name="Wedler H."/>
            <person name="Wipfli P."/>
            <person name="Wolf K."/>
            <person name="Wright L.F."/>
            <person name="Zaccaria P."/>
            <person name="Zimmermann M."/>
            <person name="Zollner A."/>
            <person name="Kleine K."/>
        </authorList>
    </citation>
    <scope>NUCLEOTIDE SEQUENCE [LARGE SCALE GENOMIC DNA]</scope>
    <source>
        <strain>ATCC 204508 / S288c</strain>
    </source>
</reference>
<reference key="3">
    <citation type="journal article" date="2014" name="G3 (Bethesda)">
        <title>The reference genome sequence of Saccharomyces cerevisiae: Then and now.</title>
        <authorList>
            <person name="Engel S.R."/>
            <person name="Dietrich F.S."/>
            <person name="Fisk D.G."/>
            <person name="Binkley G."/>
            <person name="Balakrishnan R."/>
            <person name="Costanzo M.C."/>
            <person name="Dwight S.S."/>
            <person name="Hitz B.C."/>
            <person name="Karra K."/>
            <person name="Nash R.S."/>
            <person name="Weng S."/>
            <person name="Wong E.D."/>
            <person name="Lloyd P."/>
            <person name="Skrzypek M.S."/>
            <person name="Miyasato S.R."/>
            <person name="Simison M."/>
            <person name="Cherry J.M."/>
        </authorList>
    </citation>
    <scope>GENOME REANNOTATION</scope>
    <source>
        <strain>ATCC 204508 / S288c</strain>
    </source>
</reference>
<reference key="4">
    <citation type="journal article" date="2003" name="J. Biol. Chem.">
        <title>Topology models for 37 Saccharomyces cerevisiae membrane proteins based on C-terminal reporter fusions and predictions.</title>
        <authorList>
            <person name="Kim H."/>
            <person name="Melen K."/>
            <person name="von Heijne G."/>
        </authorList>
    </citation>
    <scope>TOPOLOGY</scope>
    <scope>SUBCELLULAR LOCATION</scope>
</reference>
<reference key="5">
    <citation type="journal article" date="2006" name="Proc. Natl. Acad. Sci. U.S.A.">
        <title>A global topology map of the Saccharomyces cerevisiae membrane proteome.</title>
        <authorList>
            <person name="Kim H."/>
            <person name="Melen K."/>
            <person name="Oesterberg M."/>
            <person name="von Heijne G."/>
        </authorList>
    </citation>
    <scope>TOPOLOGY [LARGE SCALE ANALYSIS]</scope>
    <source>
        <strain>ATCC 208353 / W303-1A</strain>
    </source>
</reference>
<reference key="6">
    <citation type="journal article" date="2007" name="J. Proteome Res.">
        <title>Large-scale phosphorylation analysis of alpha-factor-arrested Saccharomyces cerevisiae.</title>
        <authorList>
            <person name="Li X."/>
            <person name="Gerber S.A."/>
            <person name="Rudner A.D."/>
            <person name="Beausoleil S.A."/>
            <person name="Haas W."/>
            <person name="Villen J."/>
            <person name="Elias J.E."/>
            <person name="Gygi S.P."/>
        </authorList>
    </citation>
    <scope>PHOSPHORYLATION [LARGE SCALE ANALYSIS] AT SER-78</scope>
    <scope>IDENTIFICATION BY MASS SPECTROMETRY [LARGE SCALE ANALYSIS]</scope>
    <source>
        <strain>ADR376</strain>
    </source>
</reference>
<reference key="7">
    <citation type="journal article" date="2008" name="J. Lipid Res.">
        <title>Identification of a novel GPCAT activity and a new pathway for phosphatidylcholine biosynthesis in S. cerevisiae.</title>
        <authorList>
            <person name="Staalberg K."/>
            <person name="Neal A.C."/>
            <person name="Ronne H."/>
            <person name="Staahl U."/>
        </authorList>
    </citation>
    <scope>FUNCTION</scope>
    <scope>CATALYTIC ACTIVITY</scope>
    <scope>BIOPHYSICOCHEMICAL PROPERTIES</scope>
    <scope>ACTIVITY REGULATION</scope>
    <scope>SUBCELLULAR LOCATION</scope>
</reference>
<reference key="8">
    <citation type="journal article" date="2008" name="Mol. Cell. Proteomics">
        <title>A multidimensional chromatography technology for in-depth phosphoproteome analysis.</title>
        <authorList>
            <person name="Albuquerque C.P."/>
            <person name="Smolka M.B."/>
            <person name="Payne S.H."/>
            <person name="Bafna V."/>
            <person name="Eng J."/>
            <person name="Zhou H."/>
        </authorList>
    </citation>
    <scope>PHOSPHORYLATION [LARGE SCALE ANALYSIS] AT SER-78</scope>
    <scope>IDENTIFICATION BY MASS SPECTROMETRY [LARGE SCALE ANALYSIS]</scope>
</reference>
<reference key="9">
    <citation type="journal article" date="2009" name="Science">
        <title>Global analysis of Cdk1 substrate phosphorylation sites provides insights into evolution.</title>
        <authorList>
            <person name="Holt L.J."/>
            <person name="Tuch B.B."/>
            <person name="Villen J."/>
            <person name="Johnson A.D."/>
            <person name="Gygi S.P."/>
            <person name="Morgan D.O."/>
        </authorList>
    </citation>
    <scope>PHOSPHORYLATION [LARGE SCALE ANALYSIS] AT SER-78</scope>
    <scope>IDENTIFICATION BY MASS SPECTROMETRY [LARGE SCALE ANALYSIS]</scope>
</reference>
<reference key="10">
    <citation type="journal article" date="2016" name="J. Biol. Chem.">
        <title>Cloning of glycerophosphocholine acyltransferase (GPCAT) from fungi and plants: a novel enzyme in phosphatidylcholine synthesis.</title>
        <authorList>
            <person name="Glab B."/>
            <person name="Beganovic M."/>
            <person name="Anaokar S."/>
            <person name="Hao M.S."/>
            <person name="Rasmusson A.G."/>
            <person name="Patton-Vogt J."/>
            <person name="Banas A."/>
            <person name="Stymne S."/>
            <person name="Lager I."/>
        </authorList>
    </citation>
    <scope>IDENTIFICATION</scope>
    <scope>FUNCTION</scope>
    <scope>CATALYTIC ACTIVITY</scope>
    <scope>BIOPHYSICOCHEMICAL PROPERTIES</scope>
    <scope>ACTIVITY REGULATION</scope>
</reference>
<reference key="11">
    <citation type="journal article" date="2019" name="J. Biol. Chem.">
        <title>The glycerophosphocholine acyltransferase Gpc1 is part of a phosphatidylcholine (PC)-remodeling pathway that alters PC species in yeast.</title>
        <authorList>
            <person name="Anaokar S."/>
            <person name="Kodali R."/>
            <person name="Jonik B."/>
            <person name="Renne M.F."/>
            <person name="Brouwers J.F.H.M."/>
            <person name="Lager I."/>
            <person name="de Kroon A.I.P.M."/>
            <person name="Patton-Vogt J."/>
        </authorList>
    </citation>
    <scope>FUNCTION</scope>
    <scope>DISRUPTION PHENOTYPE</scope>
</reference>
<evidence type="ECO:0000255" key="1"/>
<evidence type="ECO:0000256" key="2">
    <source>
        <dbReference type="SAM" id="MobiDB-lite"/>
    </source>
</evidence>
<evidence type="ECO:0000269" key="3">
    <source>
    </source>
</evidence>
<evidence type="ECO:0000269" key="4">
    <source>
    </source>
</evidence>
<evidence type="ECO:0000269" key="5">
    <source>
    </source>
</evidence>
<evidence type="ECO:0000269" key="6">
    <source>
    </source>
</evidence>
<evidence type="ECO:0000269" key="7">
    <source>
    </source>
</evidence>
<evidence type="ECO:0000303" key="8">
    <source>
    </source>
</evidence>
<evidence type="ECO:0000305" key="9"/>
<evidence type="ECO:0000305" key="10">
    <source>
    </source>
</evidence>
<evidence type="ECO:0000305" key="11">
    <source>
    </source>
</evidence>
<evidence type="ECO:0000305" key="12">
    <source>
    </source>
</evidence>
<evidence type="ECO:0007744" key="13">
    <source>
    </source>
</evidence>
<evidence type="ECO:0007744" key="14">
    <source>
    </source>
</evidence>
<evidence type="ECO:0007744" key="15">
    <source>
    </source>
</evidence>
<dbReference type="EC" id="2.3.1.-" evidence="5 6"/>
<dbReference type="EMBL" id="X85807">
    <property type="protein sequence ID" value="CAA59807.1"/>
    <property type="molecule type" value="Genomic_DNA"/>
</dbReference>
<dbReference type="EMBL" id="Z72934">
    <property type="protein sequence ID" value="CAA97163.1"/>
    <property type="molecule type" value="Genomic_DNA"/>
</dbReference>
<dbReference type="EMBL" id="BK006941">
    <property type="protein sequence ID" value="DAA08241.1"/>
    <property type="molecule type" value="Genomic_DNA"/>
</dbReference>
<dbReference type="PIR" id="S60440">
    <property type="entry name" value="S60440"/>
</dbReference>
<dbReference type="RefSeq" id="NP_011665.1">
    <property type="nucleotide sequence ID" value="NM_001181278.1"/>
</dbReference>
<dbReference type="BioGRID" id="33397">
    <property type="interactions" value="115"/>
</dbReference>
<dbReference type="DIP" id="DIP-4289N"/>
<dbReference type="FunCoup" id="P48236">
    <property type="interactions" value="275"/>
</dbReference>
<dbReference type="IntAct" id="P48236">
    <property type="interactions" value="13"/>
</dbReference>
<dbReference type="STRING" id="4932.YGR149W"/>
<dbReference type="SwissLipids" id="SLP:000001892"/>
<dbReference type="iPTMnet" id="P48236"/>
<dbReference type="PaxDb" id="4932-YGR149W"/>
<dbReference type="PeptideAtlas" id="P48236"/>
<dbReference type="EnsemblFungi" id="YGR149W_mRNA">
    <property type="protein sequence ID" value="YGR149W"/>
    <property type="gene ID" value="YGR149W"/>
</dbReference>
<dbReference type="GeneID" id="853052"/>
<dbReference type="KEGG" id="sce:YGR149W"/>
<dbReference type="AGR" id="SGD:S000003381"/>
<dbReference type="SGD" id="S000003381">
    <property type="gene designation" value="GPC1"/>
</dbReference>
<dbReference type="VEuPathDB" id="FungiDB:YGR149W"/>
<dbReference type="eggNOG" id="KOG2895">
    <property type="taxonomic scope" value="Eukaryota"/>
</dbReference>
<dbReference type="HOGENOM" id="CLU_018994_1_2_1"/>
<dbReference type="InParanoid" id="P48236"/>
<dbReference type="OMA" id="YIDYYGK"/>
<dbReference type="OrthoDB" id="406287at2759"/>
<dbReference type="BioCyc" id="YEAST:G3O-30852-MONOMER"/>
<dbReference type="BRENDA" id="2.3.1.B36">
    <property type="organism ID" value="984"/>
</dbReference>
<dbReference type="BioGRID-ORCS" id="853052">
    <property type="hits" value="0 hits in 10 CRISPR screens"/>
</dbReference>
<dbReference type="PRO" id="PR:P48236"/>
<dbReference type="Proteomes" id="UP000002311">
    <property type="component" value="Chromosome VII"/>
</dbReference>
<dbReference type="RNAct" id="P48236">
    <property type="molecule type" value="protein"/>
</dbReference>
<dbReference type="GO" id="GO:0071944">
    <property type="term" value="C:cell periphery"/>
    <property type="evidence" value="ECO:0007005"/>
    <property type="project" value="SGD"/>
</dbReference>
<dbReference type="GO" id="GO:0005783">
    <property type="term" value="C:endoplasmic reticulum"/>
    <property type="evidence" value="ECO:0007005"/>
    <property type="project" value="SGD"/>
</dbReference>
<dbReference type="GO" id="GO:0016020">
    <property type="term" value="C:membrane"/>
    <property type="evidence" value="ECO:0007669"/>
    <property type="project" value="UniProtKB-SubCell"/>
</dbReference>
<dbReference type="GO" id="GO:0106158">
    <property type="term" value="F:glycero-3-phosphocholine acyltransferase activity"/>
    <property type="evidence" value="ECO:0000314"/>
    <property type="project" value="SGD"/>
</dbReference>
<dbReference type="GO" id="GO:0036151">
    <property type="term" value="P:phosphatidylcholine acyl-chain remodeling"/>
    <property type="evidence" value="ECO:0000315"/>
    <property type="project" value="SGD"/>
</dbReference>
<dbReference type="GO" id="GO:0090640">
    <property type="term" value="P:phosphatidylcholine biosynthesis from sn-glycero-3-phosphocholine"/>
    <property type="evidence" value="ECO:0000316"/>
    <property type="project" value="SGD"/>
</dbReference>
<dbReference type="GO" id="GO:0006656">
    <property type="term" value="P:phosphatidylcholine biosynthetic process"/>
    <property type="evidence" value="ECO:0000314"/>
    <property type="project" value="SGD"/>
</dbReference>
<dbReference type="InterPro" id="IPR021261">
    <property type="entry name" value="GPCAT"/>
</dbReference>
<dbReference type="PANTHER" id="PTHR31201:SF1">
    <property type="entry name" value="GLYCEROPHOSPHOCHOLINE ACYLTRANSFERASE 1"/>
    <property type="match status" value="1"/>
</dbReference>
<dbReference type="PANTHER" id="PTHR31201">
    <property type="entry name" value="OS01G0585100 PROTEIN"/>
    <property type="match status" value="1"/>
</dbReference>
<dbReference type="Pfam" id="PF10998">
    <property type="entry name" value="DUF2838"/>
    <property type="match status" value="1"/>
</dbReference>
<proteinExistence type="evidence at protein level"/>
<sequence length="432" mass="51647">MYKLDNNDIDDETNNSVSLTSLLEFLDPIASKVVSKYYHGSHLSKAEQKLRNFEGFRRRKPHHEHDSHHPHHLNRSRSFLQLEDFKVRALQRIRNLDKPLDSIFFKNSSRLEKAFYPFTLFNIFFIGFLMGRFPEWFHVYYTILFFVLMPIRFYTYYKTKNHYFLADFCYFVNMLCLLFIWIFPYSYSLFQSCFAFTFGTLCFAVITWRNSLVIHSIDKTTSCFIHIIPPCVMYVIYHGLPLEYKIERFPGAIIQSELDIKKNILWTSLYYLVWQSLYHYFITLKKSSKIKSGERMTSFEYLTTHQFKNFWAVKLRSPWPMIIYTLSQYFYQLFTMLLCGIWIRYKLAAALFLTIVFLWASHNGATYYIDHYGKNFEKEVDRLRLEVENLQQKLQPDSDAVISDASVNDKDYLNVNRDEDFDDSSSVSSKSD</sequence>
<protein>
    <recommendedName>
        <fullName evidence="8">Glycerophosphocholine acyltransferase 1</fullName>
        <shortName evidence="8">GPCAT</shortName>
        <ecNumber evidence="5 6">2.3.1.-</ecNumber>
    </recommendedName>
</protein>
<organism>
    <name type="scientific">Saccharomyces cerevisiae (strain ATCC 204508 / S288c)</name>
    <name type="common">Baker's yeast</name>
    <dbReference type="NCBI Taxonomy" id="559292"/>
    <lineage>
        <taxon>Eukaryota</taxon>
        <taxon>Fungi</taxon>
        <taxon>Dikarya</taxon>
        <taxon>Ascomycota</taxon>
        <taxon>Saccharomycotina</taxon>
        <taxon>Saccharomycetes</taxon>
        <taxon>Saccharomycetales</taxon>
        <taxon>Saccharomycetaceae</taxon>
        <taxon>Saccharomyces</taxon>
    </lineage>
</organism>
<accession>P48236</accession>
<accession>D6VUT0</accession>
<name>GPC1_YEAST</name>
<feature type="chain" id="PRO_0000202829" description="Glycerophosphocholine acyltransferase 1">
    <location>
        <begin position="1"/>
        <end position="432"/>
    </location>
</feature>
<feature type="topological domain" description="Cytoplasmic" evidence="10 11">
    <location>
        <begin position="1"/>
        <end position="110"/>
    </location>
</feature>
<feature type="transmembrane region" description="Helical" evidence="1">
    <location>
        <begin position="111"/>
        <end position="131"/>
    </location>
</feature>
<feature type="topological domain" description="Lumenal" evidence="10 11">
    <location>
        <position position="132"/>
    </location>
</feature>
<feature type="transmembrane region" description="Helical" evidence="1">
    <location>
        <begin position="133"/>
        <end position="153"/>
    </location>
</feature>
<feature type="topological domain" description="Cytoplasmic" evidence="10 11">
    <location>
        <begin position="154"/>
        <end position="162"/>
    </location>
</feature>
<feature type="transmembrane region" description="Helical" evidence="1">
    <location>
        <begin position="163"/>
        <end position="183"/>
    </location>
</feature>
<feature type="topological domain" description="Lumenal" evidence="10 11">
    <location>
        <begin position="184"/>
        <end position="187"/>
    </location>
</feature>
<feature type="transmembrane region" description="Helical" evidence="1">
    <location>
        <begin position="188"/>
        <end position="208"/>
    </location>
</feature>
<feature type="topological domain" description="Cytoplasmic" evidence="10 11">
    <location>
        <begin position="209"/>
        <end position="221"/>
    </location>
</feature>
<feature type="transmembrane region" description="Helical" evidence="1">
    <location>
        <begin position="222"/>
        <end position="242"/>
    </location>
</feature>
<feature type="topological domain" description="Lumenal" evidence="10 11">
    <location>
        <begin position="243"/>
        <end position="263"/>
    </location>
</feature>
<feature type="transmembrane region" description="Helical" evidence="1">
    <location>
        <begin position="264"/>
        <end position="284"/>
    </location>
</feature>
<feature type="topological domain" description="Cytoplasmic" evidence="10 11">
    <location>
        <begin position="285"/>
        <end position="318"/>
    </location>
</feature>
<feature type="transmembrane region" description="Helical" evidence="1">
    <location>
        <begin position="319"/>
        <end position="339"/>
    </location>
</feature>
<feature type="topological domain" description="Lumenal" evidence="10 11">
    <location>
        <begin position="340"/>
        <end position="346"/>
    </location>
</feature>
<feature type="transmembrane region" description="Helical" evidence="1">
    <location>
        <begin position="347"/>
        <end position="369"/>
    </location>
</feature>
<feature type="topological domain" description="Cytoplasmic" evidence="3 4">
    <location>
        <begin position="370"/>
        <end position="432"/>
    </location>
</feature>
<feature type="region of interest" description="Disordered" evidence="2">
    <location>
        <begin position="413"/>
        <end position="432"/>
    </location>
</feature>
<feature type="modified residue" description="Phosphoserine" evidence="13 14 15">
    <location>
        <position position="78"/>
    </location>
</feature>